<accession>O32186</accession>
<organism>
    <name type="scientific">Bacillus subtilis (strain 168)</name>
    <dbReference type="NCBI Taxonomy" id="224308"/>
    <lineage>
        <taxon>Bacteria</taxon>
        <taxon>Bacillati</taxon>
        <taxon>Bacillota</taxon>
        <taxon>Bacilli</taxon>
        <taxon>Bacillales</taxon>
        <taxon>Bacillaceae</taxon>
        <taxon>Bacillus</taxon>
    </lineage>
</organism>
<name>YUST_BACSU</name>
<proteinExistence type="inferred from homology"/>
<comment type="similarity">
    <text evidence="2">Belongs to the LysR transcriptional regulatory family.</text>
</comment>
<evidence type="ECO:0000255" key="1">
    <source>
        <dbReference type="PROSITE-ProRule" id="PRU00253"/>
    </source>
</evidence>
<evidence type="ECO:0000305" key="2"/>
<protein>
    <recommendedName>
        <fullName>Uncharacterized HTH-type transcriptional regulator YusT</fullName>
    </recommendedName>
</protein>
<gene>
    <name type="primary">yusT</name>
    <name type="ordered locus">BSU32920</name>
</gene>
<reference key="1">
    <citation type="journal article" date="1997" name="Nature">
        <title>The complete genome sequence of the Gram-positive bacterium Bacillus subtilis.</title>
        <authorList>
            <person name="Kunst F."/>
            <person name="Ogasawara N."/>
            <person name="Moszer I."/>
            <person name="Albertini A.M."/>
            <person name="Alloni G."/>
            <person name="Azevedo V."/>
            <person name="Bertero M.G."/>
            <person name="Bessieres P."/>
            <person name="Bolotin A."/>
            <person name="Borchert S."/>
            <person name="Borriss R."/>
            <person name="Boursier L."/>
            <person name="Brans A."/>
            <person name="Braun M."/>
            <person name="Brignell S.C."/>
            <person name="Bron S."/>
            <person name="Brouillet S."/>
            <person name="Bruschi C.V."/>
            <person name="Caldwell B."/>
            <person name="Capuano V."/>
            <person name="Carter N.M."/>
            <person name="Choi S.-K."/>
            <person name="Codani J.-J."/>
            <person name="Connerton I.F."/>
            <person name="Cummings N.J."/>
            <person name="Daniel R.A."/>
            <person name="Denizot F."/>
            <person name="Devine K.M."/>
            <person name="Duesterhoeft A."/>
            <person name="Ehrlich S.D."/>
            <person name="Emmerson P.T."/>
            <person name="Entian K.-D."/>
            <person name="Errington J."/>
            <person name="Fabret C."/>
            <person name="Ferrari E."/>
            <person name="Foulger D."/>
            <person name="Fritz C."/>
            <person name="Fujita M."/>
            <person name="Fujita Y."/>
            <person name="Fuma S."/>
            <person name="Galizzi A."/>
            <person name="Galleron N."/>
            <person name="Ghim S.-Y."/>
            <person name="Glaser P."/>
            <person name="Goffeau A."/>
            <person name="Golightly E.J."/>
            <person name="Grandi G."/>
            <person name="Guiseppi G."/>
            <person name="Guy B.J."/>
            <person name="Haga K."/>
            <person name="Haiech J."/>
            <person name="Harwood C.R."/>
            <person name="Henaut A."/>
            <person name="Hilbert H."/>
            <person name="Holsappel S."/>
            <person name="Hosono S."/>
            <person name="Hullo M.-F."/>
            <person name="Itaya M."/>
            <person name="Jones L.-M."/>
            <person name="Joris B."/>
            <person name="Karamata D."/>
            <person name="Kasahara Y."/>
            <person name="Klaerr-Blanchard M."/>
            <person name="Klein C."/>
            <person name="Kobayashi Y."/>
            <person name="Koetter P."/>
            <person name="Koningstein G."/>
            <person name="Krogh S."/>
            <person name="Kumano M."/>
            <person name="Kurita K."/>
            <person name="Lapidus A."/>
            <person name="Lardinois S."/>
            <person name="Lauber J."/>
            <person name="Lazarevic V."/>
            <person name="Lee S.-M."/>
            <person name="Levine A."/>
            <person name="Liu H."/>
            <person name="Masuda S."/>
            <person name="Mauel C."/>
            <person name="Medigue C."/>
            <person name="Medina N."/>
            <person name="Mellado R.P."/>
            <person name="Mizuno M."/>
            <person name="Moestl D."/>
            <person name="Nakai S."/>
            <person name="Noback M."/>
            <person name="Noone D."/>
            <person name="O'Reilly M."/>
            <person name="Ogawa K."/>
            <person name="Ogiwara A."/>
            <person name="Oudega B."/>
            <person name="Park S.-H."/>
            <person name="Parro V."/>
            <person name="Pohl T.M."/>
            <person name="Portetelle D."/>
            <person name="Porwollik S."/>
            <person name="Prescott A.M."/>
            <person name="Presecan E."/>
            <person name="Pujic P."/>
            <person name="Purnelle B."/>
            <person name="Rapoport G."/>
            <person name="Rey M."/>
            <person name="Reynolds S."/>
            <person name="Rieger M."/>
            <person name="Rivolta C."/>
            <person name="Rocha E."/>
            <person name="Roche B."/>
            <person name="Rose M."/>
            <person name="Sadaie Y."/>
            <person name="Sato T."/>
            <person name="Scanlan E."/>
            <person name="Schleich S."/>
            <person name="Schroeter R."/>
            <person name="Scoffone F."/>
            <person name="Sekiguchi J."/>
            <person name="Sekowska A."/>
            <person name="Seror S.J."/>
            <person name="Serror P."/>
            <person name="Shin B.-S."/>
            <person name="Soldo B."/>
            <person name="Sorokin A."/>
            <person name="Tacconi E."/>
            <person name="Takagi T."/>
            <person name="Takahashi H."/>
            <person name="Takemaru K."/>
            <person name="Takeuchi M."/>
            <person name="Tamakoshi A."/>
            <person name="Tanaka T."/>
            <person name="Terpstra P."/>
            <person name="Tognoni A."/>
            <person name="Tosato V."/>
            <person name="Uchiyama S."/>
            <person name="Vandenbol M."/>
            <person name="Vannier F."/>
            <person name="Vassarotti A."/>
            <person name="Viari A."/>
            <person name="Wambutt R."/>
            <person name="Wedler E."/>
            <person name="Wedler H."/>
            <person name="Weitzenegger T."/>
            <person name="Winters P."/>
            <person name="Wipat A."/>
            <person name="Yamamoto H."/>
            <person name="Yamane K."/>
            <person name="Yasumoto K."/>
            <person name="Yata K."/>
            <person name="Yoshida K."/>
            <person name="Yoshikawa H.-F."/>
            <person name="Zumstein E."/>
            <person name="Yoshikawa H."/>
            <person name="Danchin A."/>
        </authorList>
    </citation>
    <scope>NUCLEOTIDE SEQUENCE [LARGE SCALE GENOMIC DNA]</scope>
    <source>
        <strain>168</strain>
    </source>
</reference>
<keyword id="KW-0238">DNA-binding</keyword>
<keyword id="KW-1185">Reference proteome</keyword>
<keyword id="KW-0804">Transcription</keyword>
<keyword id="KW-0805">Transcription regulation</keyword>
<feature type="chain" id="PRO_0000105821" description="Uncharacterized HTH-type transcriptional regulator YusT">
    <location>
        <begin position="1"/>
        <end position="295"/>
    </location>
</feature>
<feature type="domain" description="HTH lysR-type" evidence="1">
    <location>
        <begin position="1"/>
        <end position="58"/>
    </location>
</feature>
<feature type="DNA-binding region" description="H-T-H motif" evidence="1">
    <location>
        <begin position="18"/>
        <end position="37"/>
    </location>
</feature>
<sequence length="295" mass="32229">MESGDLRVFQMVAREGTITKAALQLGYVQSNVTARIQQLEAELGTTLFLRHNRGMTLSASGKLLLDYANKIIGLLDEASKALSSSAEPSGPLMIGCTQTTAAVRLPKLLASYYEEHPNVQLSLTTGHTQFLLDKVLRYELDGAFIGCECHHPELESYPAFEEEPVVVSAASVPDVEEAITKPILVYSTGCSYRETLEKWLRSVGVTQPVIMEFGTLEAIIGGVTAGLGISLLPRTVVQKHEAEGSIRLYPLPEALSQMKTEFIVRKDSFISSALRTFMDSFTPVKTAESQKSSLL</sequence>
<dbReference type="EMBL" id="AL009126">
    <property type="protein sequence ID" value="CAB15281.1"/>
    <property type="molecule type" value="Genomic_DNA"/>
</dbReference>
<dbReference type="PIR" id="E70022">
    <property type="entry name" value="E70022"/>
</dbReference>
<dbReference type="RefSeq" id="NP_391171.1">
    <property type="nucleotide sequence ID" value="NC_000964.3"/>
</dbReference>
<dbReference type="RefSeq" id="WP_003228551.1">
    <property type="nucleotide sequence ID" value="NZ_OZ025638.1"/>
</dbReference>
<dbReference type="SMR" id="O32186"/>
<dbReference type="FunCoup" id="O32186">
    <property type="interactions" value="110"/>
</dbReference>
<dbReference type="STRING" id="224308.BSU32920"/>
<dbReference type="PaxDb" id="224308-BSU32920"/>
<dbReference type="EnsemblBacteria" id="CAB15281">
    <property type="protein sequence ID" value="CAB15281"/>
    <property type="gene ID" value="BSU_32920"/>
</dbReference>
<dbReference type="GeneID" id="938601"/>
<dbReference type="KEGG" id="bsu:BSU32920"/>
<dbReference type="PATRIC" id="fig|224308.179.peg.3568"/>
<dbReference type="eggNOG" id="COG0583">
    <property type="taxonomic scope" value="Bacteria"/>
</dbReference>
<dbReference type="InParanoid" id="O32186"/>
<dbReference type="OrthoDB" id="8479357at2"/>
<dbReference type="PhylomeDB" id="O32186"/>
<dbReference type="BioCyc" id="BSUB:BSU32920-MONOMER"/>
<dbReference type="Proteomes" id="UP000001570">
    <property type="component" value="Chromosome"/>
</dbReference>
<dbReference type="GO" id="GO:0003700">
    <property type="term" value="F:DNA-binding transcription factor activity"/>
    <property type="evidence" value="ECO:0007669"/>
    <property type="project" value="InterPro"/>
</dbReference>
<dbReference type="GO" id="GO:0000976">
    <property type="term" value="F:transcription cis-regulatory region binding"/>
    <property type="evidence" value="ECO:0000318"/>
    <property type="project" value="GO_Central"/>
</dbReference>
<dbReference type="GO" id="GO:0006355">
    <property type="term" value="P:regulation of DNA-templated transcription"/>
    <property type="evidence" value="ECO:0000318"/>
    <property type="project" value="GO_Central"/>
</dbReference>
<dbReference type="CDD" id="cd08442">
    <property type="entry name" value="PBP2_YofA_SoxR_like"/>
    <property type="match status" value="1"/>
</dbReference>
<dbReference type="FunFam" id="1.10.10.10:FF:000001">
    <property type="entry name" value="LysR family transcriptional regulator"/>
    <property type="match status" value="1"/>
</dbReference>
<dbReference type="Gene3D" id="3.40.190.290">
    <property type="match status" value="1"/>
</dbReference>
<dbReference type="Gene3D" id="1.10.10.10">
    <property type="entry name" value="Winged helix-like DNA-binding domain superfamily/Winged helix DNA-binding domain"/>
    <property type="match status" value="1"/>
</dbReference>
<dbReference type="InterPro" id="IPR005119">
    <property type="entry name" value="LysR_subst-bd"/>
</dbReference>
<dbReference type="InterPro" id="IPR000847">
    <property type="entry name" value="Tscrpt_reg_HTH_LysR"/>
</dbReference>
<dbReference type="InterPro" id="IPR036388">
    <property type="entry name" value="WH-like_DNA-bd_sf"/>
</dbReference>
<dbReference type="InterPro" id="IPR036390">
    <property type="entry name" value="WH_DNA-bd_sf"/>
</dbReference>
<dbReference type="PANTHER" id="PTHR30126">
    <property type="entry name" value="HTH-TYPE TRANSCRIPTIONAL REGULATOR"/>
    <property type="match status" value="1"/>
</dbReference>
<dbReference type="PANTHER" id="PTHR30126:SF40">
    <property type="entry name" value="HTH-TYPE TRANSCRIPTIONAL REGULATOR GLTR"/>
    <property type="match status" value="1"/>
</dbReference>
<dbReference type="Pfam" id="PF00126">
    <property type="entry name" value="HTH_1"/>
    <property type="match status" value="1"/>
</dbReference>
<dbReference type="Pfam" id="PF03466">
    <property type="entry name" value="LysR_substrate"/>
    <property type="match status" value="1"/>
</dbReference>
<dbReference type="PRINTS" id="PR00039">
    <property type="entry name" value="HTHLYSR"/>
</dbReference>
<dbReference type="SUPFAM" id="SSF53850">
    <property type="entry name" value="Periplasmic binding protein-like II"/>
    <property type="match status" value="1"/>
</dbReference>
<dbReference type="SUPFAM" id="SSF46785">
    <property type="entry name" value="Winged helix' DNA-binding domain"/>
    <property type="match status" value="1"/>
</dbReference>
<dbReference type="PROSITE" id="PS50931">
    <property type="entry name" value="HTH_LYSR"/>
    <property type="match status" value="1"/>
</dbReference>